<reference key="1">
    <citation type="journal article" date="2014" name="Stand. Genomic Sci.">
        <title>Complete genome sequence of Burkholderia phymatum STM815(T), a broad host range and efficient nitrogen-fixing symbiont of Mimosa species.</title>
        <authorList>
            <person name="Moulin L."/>
            <person name="Klonowska A."/>
            <person name="Caroline B."/>
            <person name="Booth K."/>
            <person name="Vriezen J.A."/>
            <person name="Melkonian R."/>
            <person name="James E.K."/>
            <person name="Young J.P."/>
            <person name="Bena G."/>
            <person name="Hauser L."/>
            <person name="Land M."/>
            <person name="Kyrpides N."/>
            <person name="Bruce D."/>
            <person name="Chain P."/>
            <person name="Copeland A."/>
            <person name="Pitluck S."/>
            <person name="Woyke T."/>
            <person name="Lizotte-Waniewski M."/>
            <person name="Bristow J."/>
            <person name="Riley M."/>
        </authorList>
    </citation>
    <scope>NUCLEOTIDE SEQUENCE [LARGE SCALE GENOMIC DNA]</scope>
    <source>
        <strain>DSM 17167 / CIP 108236 / LMG 21445 / STM815</strain>
    </source>
</reference>
<evidence type="ECO:0000255" key="1">
    <source>
        <dbReference type="HAMAP-Rule" id="MF_01307"/>
    </source>
</evidence>
<evidence type="ECO:0000305" key="2"/>
<organism>
    <name type="scientific">Paraburkholderia phymatum (strain DSM 17167 / CIP 108236 / LMG 21445 / STM815)</name>
    <name type="common">Burkholderia phymatum</name>
    <dbReference type="NCBI Taxonomy" id="391038"/>
    <lineage>
        <taxon>Bacteria</taxon>
        <taxon>Pseudomonadati</taxon>
        <taxon>Pseudomonadota</taxon>
        <taxon>Betaproteobacteria</taxon>
        <taxon>Burkholderiales</taxon>
        <taxon>Burkholderiaceae</taxon>
        <taxon>Paraburkholderia</taxon>
    </lineage>
</organism>
<gene>
    <name evidence="1" type="primary">rpsE</name>
    <name type="ordered locus">Bphy_2822</name>
</gene>
<dbReference type="EMBL" id="CP001043">
    <property type="protein sequence ID" value="ACC71994.1"/>
    <property type="molecule type" value="Genomic_DNA"/>
</dbReference>
<dbReference type="RefSeq" id="WP_007730604.1">
    <property type="nucleotide sequence ID" value="NZ_CADFGH010000028.1"/>
</dbReference>
<dbReference type="SMR" id="B2JI48"/>
<dbReference type="STRING" id="391038.Bphy_2822"/>
<dbReference type="GeneID" id="69968037"/>
<dbReference type="KEGG" id="bph:Bphy_2822"/>
<dbReference type="eggNOG" id="COG0098">
    <property type="taxonomic scope" value="Bacteria"/>
</dbReference>
<dbReference type="HOGENOM" id="CLU_065898_2_2_4"/>
<dbReference type="OrthoDB" id="9809045at2"/>
<dbReference type="Proteomes" id="UP000001192">
    <property type="component" value="Chromosome 1"/>
</dbReference>
<dbReference type="GO" id="GO:0015935">
    <property type="term" value="C:small ribosomal subunit"/>
    <property type="evidence" value="ECO:0007669"/>
    <property type="project" value="InterPro"/>
</dbReference>
<dbReference type="GO" id="GO:0019843">
    <property type="term" value="F:rRNA binding"/>
    <property type="evidence" value="ECO:0007669"/>
    <property type="project" value="UniProtKB-UniRule"/>
</dbReference>
<dbReference type="GO" id="GO:0003735">
    <property type="term" value="F:structural constituent of ribosome"/>
    <property type="evidence" value="ECO:0007669"/>
    <property type="project" value="InterPro"/>
</dbReference>
<dbReference type="GO" id="GO:0006412">
    <property type="term" value="P:translation"/>
    <property type="evidence" value="ECO:0007669"/>
    <property type="project" value="UniProtKB-UniRule"/>
</dbReference>
<dbReference type="FunFam" id="3.30.160.20:FF:000001">
    <property type="entry name" value="30S ribosomal protein S5"/>
    <property type="match status" value="1"/>
</dbReference>
<dbReference type="FunFam" id="3.30.230.10:FF:000002">
    <property type="entry name" value="30S ribosomal protein S5"/>
    <property type="match status" value="1"/>
</dbReference>
<dbReference type="Gene3D" id="3.30.160.20">
    <property type="match status" value="1"/>
</dbReference>
<dbReference type="Gene3D" id="3.30.230.10">
    <property type="match status" value="1"/>
</dbReference>
<dbReference type="HAMAP" id="MF_01307_B">
    <property type="entry name" value="Ribosomal_uS5_B"/>
    <property type="match status" value="1"/>
</dbReference>
<dbReference type="InterPro" id="IPR020568">
    <property type="entry name" value="Ribosomal_Su5_D2-typ_SF"/>
</dbReference>
<dbReference type="InterPro" id="IPR000851">
    <property type="entry name" value="Ribosomal_uS5"/>
</dbReference>
<dbReference type="InterPro" id="IPR005712">
    <property type="entry name" value="Ribosomal_uS5_bac-type"/>
</dbReference>
<dbReference type="InterPro" id="IPR005324">
    <property type="entry name" value="Ribosomal_uS5_C"/>
</dbReference>
<dbReference type="InterPro" id="IPR013810">
    <property type="entry name" value="Ribosomal_uS5_N"/>
</dbReference>
<dbReference type="InterPro" id="IPR018192">
    <property type="entry name" value="Ribosomal_uS5_N_CS"/>
</dbReference>
<dbReference type="InterPro" id="IPR014721">
    <property type="entry name" value="Ribsml_uS5_D2-typ_fold_subgr"/>
</dbReference>
<dbReference type="NCBIfam" id="TIGR01021">
    <property type="entry name" value="rpsE_bact"/>
    <property type="match status" value="1"/>
</dbReference>
<dbReference type="PANTHER" id="PTHR48277">
    <property type="entry name" value="MITOCHONDRIAL RIBOSOMAL PROTEIN S5"/>
    <property type="match status" value="1"/>
</dbReference>
<dbReference type="PANTHER" id="PTHR48277:SF1">
    <property type="entry name" value="MITOCHONDRIAL RIBOSOMAL PROTEIN S5"/>
    <property type="match status" value="1"/>
</dbReference>
<dbReference type="Pfam" id="PF00333">
    <property type="entry name" value="Ribosomal_S5"/>
    <property type="match status" value="1"/>
</dbReference>
<dbReference type="Pfam" id="PF03719">
    <property type="entry name" value="Ribosomal_S5_C"/>
    <property type="match status" value="1"/>
</dbReference>
<dbReference type="SUPFAM" id="SSF54768">
    <property type="entry name" value="dsRNA-binding domain-like"/>
    <property type="match status" value="1"/>
</dbReference>
<dbReference type="SUPFAM" id="SSF54211">
    <property type="entry name" value="Ribosomal protein S5 domain 2-like"/>
    <property type="match status" value="1"/>
</dbReference>
<dbReference type="PROSITE" id="PS00585">
    <property type="entry name" value="RIBOSOMAL_S5"/>
    <property type="match status" value="1"/>
</dbReference>
<dbReference type="PROSITE" id="PS50881">
    <property type="entry name" value="S5_DSRBD"/>
    <property type="match status" value="1"/>
</dbReference>
<protein>
    <recommendedName>
        <fullName evidence="1">Small ribosomal subunit protein uS5</fullName>
    </recommendedName>
    <alternativeName>
        <fullName evidence="2">30S ribosomal protein S5</fullName>
    </alternativeName>
</protein>
<accession>B2JI48</accession>
<keyword id="KW-1185">Reference proteome</keyword>
<keyword id="KW-0687">Ribonucleoprotein</keyword>
<keyword id="KW-0689">Ribosomal protein</keyword>
<keyword id="KW-0694">RNA-binding</keyword>
<keyword id="KW-0699">rRNA-binding</keyword>
<proteinExistence type="inferred from homology"/>
<comment type="function">
    <text evidence="1">With S4 and S12 plays an important role in translational accuracy.</text>
</comment>
<comment type="function">
    <text evidence="1">Located at the back of the 30S subunit body where it stabilizes the conformation of the head with respect to the body.</text>
</comment>
<comment type="subunit">
    <text evidence="1">Part of the 30S ribosomal subunit. Contacts proteins S4 and S8.</text>
</comment>
<comment type="domain">
    <text>The N-terminal domain interacts with the head of the 30S subunit; the C-terminal domain interacts with the body and contacts protein S4. The interaction surface between S4 and S5 is involved in control of translational fidelity.</text>
</comment>
<comment type="similarity">
    <text evidence="1">Belongs to the universal ribosomal protein uS5 family.</text>
</comment>
<feature type="chain" id="PRO_1000140844" description="Small ribosomal subunit protein uS5">
    <location>
        <begin position="1"/>
        <end position="172"/>
    </location>
</feature>
<feature type="domain" description="S5 DRBM" evidence="1">
    <location>
        <begin position="17"/>
        <end position="80"/>
    </location>
</feature>
<name>RS5_PARP8</name>
<sequence>MAKMQAKVQADERDDGLREKMISVNRVTKVVKGGRILGFAALTVVGDGDGRVGMGKGKAKEVPVAVQKAMEQARRNMFKVPLKNGTLQHEVHGKHGASTVLLAPAKDGTGVIAGGPMRAVFDVMGVQNVVAKSHGSTNPYNLVRATLDGLRKQSTPADIAAKRGKSVEDILG</sequence>